<proteinExistence type="inferred from homology"/>
<accession>Q1KVV8</accession>
<keyword id="KW-0150">Chloroplast</keyword>
<keyword id="KW-0934">Plastid</keyword>
<keyword id="KW-0687">Ribonucleoprotein</keyword>
<keyword id="KW-0689">Ribosomal protein</keyword>
<organism>
    <name type="scientific">Tetradesmus obliquus</name>
    <name type="common">Green alga</name>
    <name type="synonym">Acutodesmus obliquus</name>
    <dbReference type="NCBI Taxonomy" id="3088"/>
    <lineage>
        <taxon>Eukaryota</taxon>
        <taxon>Viridiplantae</taxon>
        <taxon>Chlorophyta</taxon>
        <taxon>core chlorophytes</taxon>
        <taxon>Chlorophyceae</taxon>
        <taxon>CS clade</taxon>
        <taxon>Sphaeropleales</taxon>
        <taxon>Scenedesmaceae</taxon>
        <taxon>Tetradesmus</taxon>
    </lineage>
</organism>
<comment type="subcellular location">
    <subcellularLocation>
        <location>Plastid</location>
        <location>Chloroplast</location>
    </subcellularLocation>
</comment>
<comment type="similarity">
    <text evidence="2">Belongs to the universal ribosomal protein uS2 family.</text>
</comment>
<name>RR2B_TETOB</name>
<protein>
    <recommendedName>
        <fullName evidence="2">Small ribosomal subunit protein uS2cy</fullName>
    </recommendedName>
    <alternativeName>
        <fullName>30S ribosomal protein S2, chloroplastic 2</fullName>
    </alternativeName>
</protein>
<gene>
    <name type="primary">rps2-2</name>
    <name type="synonym">rps2b</name>
</gene>
<dbReference type="EMBL" id="DQ396875">
    <property type="protein sequence ID" value="ABD48249.1"/>
    <property type="molecule type" value="Genomic_DNA"/>
</dbReference>
<dbReference type="SMR" id="Q1KVV8"/>
<dbReference type="GO" id="GO:0009507">
    <property type="term" value="C:chloroplast"/>
    <property type="evidence" value="ECO:0007669"/>
    <property type="project" value="UniProtKB-SubCell"/>
</dbReference>
<dbReference type="GO" id="GO:0005763">
    <property type="term" value="C:mitochondrial small ribosomal subunit"/>
    <property type="evidence" value="ECO:0007669"/>
    <property type="project" value="TreeGrafter"/>
</dbReference>
<dbReference type="GO" id="GO:0003735">
    <property type="term" value="F:structural constituent of ribosome"/>
    <property type="evidence" value="ECO:0007669"/>
    <property type="project" value="InterPro"/>
</dbReference>
<dbReference type="GO" id="GO:0006412">
    <property type="term" value="P:translation"/>
    <property type="evidence" value="ECO:0007669"/>
    <property type="project" value="UniProtKB-UniRule"/>
</dbReference>
<dbReference type="CDD" id="cd01425">
    <property type="entry name" value="RPS2"/>
    <property type="match status" value="1"/>
</dbReference>
<dbReference type="Gene3D" id="3.40.50.10490">
    <property type="entry name" value="Glucose-6-phosphate isomerase like protein, domain 1"/>
    <property type="match status" value="1"/>
</dbReference>
<dbReference type="HAMAP" id="MF_00291_B">
    <property type="entry name" value="Ribosomal_uS2_B"/>
    <property type="match status" value="1"/>
</dbReference>
<dbReference type="InterPro" id="IPR001865">
    <property type="entry name" value="Ribosomal_uS2"/>
</dbReference>
<dbReference type="InterPro" id="IPR005706">
    <property type="entry name" value="Ribosomal_uS2_bac/mit/plastid"/>
</dbReference>
<dbReference type="InterPro" id="IPR023591">
    <property type="entry name" value="Ribosomal_uS2_flav_dom_sf"/>
</dbReference>
<dbReference type="NCBIfam" id="TIGR01011">
    <property type="entry name" value="rpsB_bact"/>
    <property type="match status" value="1"/>
</dbReference>
<dbReference type="PANTHER" id="PTHR12534">
    <property type="entry name" value="30S RIBOSOMAL PROTEIN S2 PROKARYOTIC AND ORGANELLAR"/>
    <property type="match status" value="1"/>
</dbReference>
<dbReference type="PANTHER" id="PTHR12534:SF0">
    <property type="entry name" value="SMALL RIBOSOMAL SUBUNIT PROTEIN US2M"/>
    <property type="match status" value="1"/>
</dbReference>
<dbReference type="Pfam" id="PF00318">
    <property type="entry name" value="Ribosomal_S2"/>
    <property type="match status" value="1"/>
</dbReference>
<dbReference type="PRINTS" id="PR00395">
    <property type="entry name" value="RIBOSOMALS2"/>
</dbReference>
<dbReference type="SUPFAM" id="SSF52313">
    <property type="entry name" value="Ribosomal protein S2"/>
    <property type="match status" value="1"/>
</dbReference>
<feature type="chain" id="PRO_0000352157" description="Small ribosomal subunit protein uS2cy">
    <location>
        <begin position="1"/>
        <end position="379"/>
    </location>
</feature>
<feature type="region of interest" description="N-terminal extension">
    <location>
        <begin position="1"/>
        <end position="94"/>
    </location>
</feature>
<feature type="region of interest" description="Disordered" evidence="1">
    <location>
        <begin position="83"/>
        <end position="106"/>
    </location>
</feature>
<geneLocation type="chloroplast"/>
<reference key="1">
    <citation type="journal article" date="2006" name="BMC Evol. Biol.">
        <title>The complete chloroplast genome sequence of the chlorophycean green alga Scenedesmus obliquus reveals a compact gene organization and a biased distribution of genes on the two DNA strands.</title>
        <authorList>
            <person name="de Cambiaire J.-C."/>
            <person name="Otis C."/>
            <person name="Lemieux C."/>
            <person name="Turmel M."/>
        </authorList>
    </citation>
    <scope>NUCLEOTIDE SEQUENCE [LARGE SCALE GENOMIC DNA]</scope>
    <source>
        <strain>UTEX 393</strain>
    </source>
</reference>
<sequence>MKLVQFFEIGQQLLKTKDFVEKNKNTTVVTLSYEKLLTLQNSTGGDNLQVTATLPNPSPEIFKKMIAIVSNLRKEENGFFATNQMGTSSNRAKSTDTPAVSTSQNVGGANEPKTILISKFLNKFILLLPFFKNSLQTLSDRLVQQEKMLKELNSTFTKITESQKSLKQLYKKTISQYAVVSSKFIVQQNNFKKFQKNLKQFASEQRLLKFLPKLRYLPTSQTKMYEIVELFMKKFVDPKLSYPMEQIYDQKLKFTSKKIAATRKQKWQRLEKYFGGITKMAKMNTKQISKNVAIIIGQQEEMNAVHECRKLGMKIFAVVDTNCNPKFVDHIIPANDDSRNSIKYILGEMLTYIRLGQKLRKKVSLRAKIQQNRKKRFAY</sequence>
<evidence type="ECO:0000256" key="1">
    <source>
        <dbReference type="SAM" id="MobiDB-lite"/>
    </source>
</evidence>
<evidence type="ECO:0000305" key="2"/>